<accession>A3MRW7</accession>
<keyword id="KW-0687">Ribonucleoprotein</keyword>
<keyword id="KW-0689">Ribosomal protein</keyword>
<keyword id="KW-0694">RNA-binding</keyword>
<keyword id="KW-0699">rRNA-binding</keyword>
<evidence type="ECO:0000255" key="1">
    <source>
        <dbReference type="HAMAP-Rule" id="MF_00537"/>
    </source>
</evidence>
<evidence type="ECO:0000305" key="2"/>
<proteinExistence type="inferred from homology"/>
<organism>
    <name type="scientific">Burkholderia mallei (strain NCTC 10247)</name>
    <dbReference type="NCBI Taxonomy" id="320389"/>
    <lineage>
        <taxon>Bacteria</taxon>
        <taxon>Pseudomonadati</taxon>
        <taxon>Pseudomonadota</taxon>
        <taxon>Betaproteobacteria</taxon>
        <taxon>Burkholderiales</taxon>
        <taxon>Burkholderiaceae</taxon>
        <taxon>Burkholderia</taxon>
        <taxon>pseudomallei group</taxon>
    </lineage>
</organism>
<feature type="chain" id="PRO_1000128333" description="Small ribosomal subunit protein uS14">
    <location>
        <begin position="1"/>
        <end position="101"/>
    </location>
</feature>
<name>RS14_BURM7</name>
<protein>
    <recommendedName>
        <fullName evidence="1">Small ribosomal subunit protein uS14</fullName>
    </recommendedName>
    <alternativeName>
        <fullName evidence="2">30S ribosomal protein S14</fullName>
    </alternativeName>
</protein>
<reference key="1">
    <citation type="journal article" date="2010" name="Genome Biol. Evol.">
        <title>Continuing evolution of Burkholderia mallei through genome reduction and large-scale rearrangements.</title>
        <authorList>
            <person name="Losada L."/>
            <person name="Ronning C.M."/>
            <person name="DeShazer D."/>
            <person name="Woods D."/>
            <person name="Fedorova N."/>
            <person name="Kim H.S."/>
            <person name="Shabalina S.A."/>
            <person name="Pearson T.R."/>
            <person name="Brinkac L."/>
            <person name="Tan P."/>
            <person name="Nandi T."/>
            <person name="Crabtree J."/>
            <person name="Badger J."/>
            <person name="Beckstrom-Sternberg S."/>
            <person name="Saqib M."/>
            <person name="Schutzer S.E."/>
            <person name="Keim P."/>
            <person name="Nierman W.C."/>
        </authorList>
    </citation>
    <scope>NUCLEOTIDE SEQUENCE [LARGE SCALE GENOMIC DNA]</scope>
    <source>
        <strain>NCTC 10247</strain>
    </source>
</reference>
<gene>
    <name evidence="1" type="primary">rpsN</name>
    <name type="ordered locus">BMA10247_3491</name>
</gene>
<dbReference type="EMBL" id="CP000548">
    <property type="protein sequence ID" value="ABO06103.1"/>
    <property type="molecule type" value="Genomic_DNA"/>
</dbReference>
<dbReference type="RefSeq" id="WP_004197948.1">
    <property type="nucleotide sequence ID" value="NZ_CP007802.1"/>
</dbReference>
<dbReference type="SMR" id="A3MRW7"/>
<dbReference type="GeneID" id="93061819"/>
<dbReference type="KEGG" id="bmaz:BM44_3028"/>
<dbReference type="KEGG" id="bmn:BMA10247_3491"/>
<dbReference type="PATRIC" id="fig|320389.8.peg.3400"/>
<dbReference type="GO" id="GO:0005737">
    <property type="term" value="C:cytoplasm"/>
    <property type="evidence" value="ECO:0007669"/>
    <property type="project" value="UniProtKB-ARBA"/>
</dbReference>
<dbReference type="GO" id="GO:0015935">
    <property type="term" value="C:small ribosomal subunit"/>
    <property type="evidence" value="ECO:0007669"/>
    <property type="project" value="TreeGrafter"/>
</dbReference>
<dbReference type="GO" id="GO:0019843">
    <property type="term" value="F:rRNA binding"/>
    <property type="evidence" value="ECO:0007669"/>
    <property type="project" value="UniProtKB-UniRule"/>
</dbReference>
<dbReference type="GO" id="GO:0003735">
    <property type="term" value="F:structural constituent of ribosome"/>
    <property type="evidence" value="ECO:0007669"/>
    <property type="project" value="InterPro"/>
</dbReference>
<dbReference type="GO" id="GO:0006412">
    <property type="term" value="P:translation"/>
    <property type="evidence" value="ECO:0007669"/>
    <property type="project" value="UniProtKB-UniRule"/>
</dbReference>
<dbReference type="FunFam" id="1.10.287.1480:FF:000001">
    <property type="entry name" value="30S ribosomal protein S14"/>
    <property type="match status" value="1"/>
</dbReference>
<dbReference type="Gene3D" id="1.10.287.1480">
    <property type="match status" value="1"/>
</dbReference>
<dbReference type="HAMAP" id="MF_00537">
    <property type="entry name" value="Ribosomal_uS14_1"/>
    <property type="match status" value="1"/>
</dbReference>
<dbReference type="InterPro" id="IPR001209">
    <property type="entry name" value="Ribosomal_uS14"/>
</dbReference>
<dbReference type="InterPro" id="IPR023036">
    <property type="entry name" value="Ribosomal_uS14_bac/plastid"/>
</dbReference>
<dbReference type="NCBIfam" id="NF006477">
    <property type="entry name" value="PRK08881.1"/>
    <property type="match status" value="1"/>
</dbReference>
<dbReference type="PANTHER" id="PTHR19836">
    <property type="entry name" value="30S RIBOSOMAL PROTEIN S14"/>
    <property type="match status" value="1"/>
</dbReference>
<dbReference type="PANTHER" id="PTHR19836:SF19">
    <property type="entry name" value="SMALL RIBOSOMAL SUBUNIT PROTEIN US14M"/>
    <property type="match status" value="1"/>
</dbReference>
<dbReference type="Pfam" id="PF00253">
    <property type="entry name" value="Ribosomal_S14"/>
    <property type="match status" value="1"/>
</dbReference>
<dbReference type="SUPFAM" id="SSF57716">
    <property type="entry name" value="Glucocorticoid receptor-like (DNA-binding domain)"/>
    <property type="match status" value="1"/>
</dbReference>
<comment type="function">
    <text evidence="1">Binds 16S rRNA, required for the assembly of 30S particles and may also be responsible for determining the conformation of the 16S rRNA at the A site.</text>
</comment>
<comment type="subunit">
    <text evidence="1">Part of the 30S ribosomal subunit. Contacts proteins S3 and S10.</text>
</comment>
<comment type="similarity">
    <text evidence="1">Belongs to the universal ribosomal protein uS14 family.</text>
</comment>
<sequence>MAKLALIEREKKRARLAQKYAPKRAELKAIIDDASKSDEERYAARLELQQLPRNANPTRKRNRCAITGRPRGTFRKFGLARNKIREIAFRGEIPGLTKASW</sequence>